<evidence type="ECO:0000255" key="1">
    <source>
        <dbReference type="HAMAP-Rule" id="MF_00833"/>
    </source>
</evidence>
<evidence type="ECO:0000256" key="2">
    <source>
        <dbReference type="SAM" id="MobiDB-lite"/>
    </source>
</evidence>
<keyword id="KW-0285">Flavoprotein</keyword>
<keyword id="KW-0288">FMN</keyword>
<keyword id="KW-0520">NAD</keyword>
<keyword id="KW-0560">Oxidoreductase</keyword>
<keyword id="KW-1185">Reference proteome</keyword>
<accession>C5B0U5</accession>
<dbReference type="EC" id="1.5.1.42" evidence="1"/>
<dbReference type="EMBL" id="CP001510">
    <property type="protein sequence ID" value="ACS39509.1"/>
    <property type="molecule type" value="Genomic_DNA"/>
</dbReference>
<dbReference type="RefSeq" id="WP_012752594.1">
    <property type="nucleotide sequence ID" value="NC_012808.1"/>
</dbReference>
<dbReference type="SMR" id="C5B0U5"/>
<dbReference type="STRING" id="272630.MexAM1_META1p1660"/>
<dbReference type="KEGG" id="mea:Mex_1p1660"/>
<dbReference type="eggNOG" id="COG1853">
    <property type="taxonomic scope" value="Bacteria"/>
</dbReference>
<dbReference type="HOGENOM" id="CLU_059021_2_2_5"/>
<dbReference type="OrthoDB" id="9789254at2"/>
<dbReference type="Proteomes" id="UP000009081">
    <property type="component" value="Chromosome"/>
</dbReference>
<dbReference type="GO" id="GO:0010181">
    <property type="term" value="F:FMN binding"/>
    <property type="evidence" value="ECO:0007669"/>
    <property type="project" value="InterPro"/>
</dbReference>
<dbReference type="GO" id="GO:0052874">
    <property type="term" value="F:FMN reductase (NADH) activity"/>
    <property type="evidence" value="ECO:0007669"/>
    <property type="project" value="UniProtKB-EC"/>
</dbReference>
<dbReference type="GO" id="GO:0008752">
    <property type="term" value="F:FMN reductase [NAD(P)H] activity"/>
    <property type="evidence" value="ECO:0007669"/>
    <property type="project" value="InterPro"/>
</dbReference>
<dbReference type="GO" id="GO:0042602">
    <property type="term" value="F:riboflavin reductase (NADPH) activity"/>
    <property type="evidence" value="ECO:0007669"/>
    <property type="project" value="UniProtKB-UniRule"/>
</dbReference>
<dbReference type="GO" id="GO:0019740">
    <property type="term" value="P:nitrogen utilization"/>
    <property type="evidence" value="ECO:0007669"/>
    <property type="project" value="UniProtKB-UniRule"/>
</dbReference>
<dbReference type="GO" id="GO:0006212">
    <property type="term" value="P:uracil catabolic process"/>
    <property type="evidence" value="ECO:0007669"/>
    <property type="project" value="UniProtKB-UniRule"/>
</dbReference>
<dbReference type="Gene3D" id="2.30.110.10">
    <property type="entry name" value="Electron Transport, Fmn-binding Protein, Chain A"/>
    <property type="match status" value="1"/>
</dbReference>
<dbReference type="HAMAP" id="MF_00833">
    <property type="entry name" value="RutF"/>
    <property type="match status" value="1"/>
</dbReference>
<dbReference type="InterPro" id="IPR002563">
    <property type="entry name" value="Flavin_Rdtase-like_dom"/>
</dbReference>
<dbReference type="InterPro" id="IPR050268">
    <property type="entry name" value="NADH-dep_flavin_reductase"/>
</dbReference>
<dbReference type="InterPro" id="IPR019917">
    <property type="entry name" value="RutF"/>
</dbReference>
<dbReference type="InterPro" id="IPR012349">
    <property type="entry name" value="Split_barrel_FMN-bd"/>
</dbReference>
<dbReference type="NCBIfam" id="TIGR03615">
    <property type="entry name" value="RutF"/>
    <property type="match status" value="1"/>
</dbReference>
<dbReference type="PANTHER" id="PTHR30466">
    <property type="entry name" value="FLAVIN REDUCTASE"/>
    <property type="match status" value="1"/>
</dbReference>
<dbReference type="PANTHER" id="PTHR30466:SF1">
    <property type="entry name" value="FMN REDUCTASE (NADH) RUTF"/>
    <property type="match status" value="1"/>
</dbReference>
<dbReference type="Pfam" id="PF01613">
    <property type="entry name" value="Flavin_Reduct"/>
    <property type="match status" value="1"/>
</dbReference>
<dbReference type="SMART" id="SM00903">
    <property type="entry name" value="Flavin_Reduct"/>
    <property type="match status" value="1"/>
</dbReference>
<dbReference type="SUPFAM" id="SSF50475">
    <property type="entry name" value="FMN-binding split barrel"/>
    <property type="match status" value="1"/>
</dbReference>
<sequence>MTESESAAVPVDAAAYREAMSRLASAVHLITTDGPGGRAGFTASAVCSVSDAPPTLLVCINRTSSAYAALTQNGTLCVNTLGEGHETVAGLFGGRTPVDERFAAGTWRRLRSGALALTDALVSFDCRIVGRHAVGSHDVLYCAVEAVAASGQADALLYSERRYRTLPRAPRSGAAPAEPARAARALGARPAEGPALALRSA</sequence>
<name>RUTF_METEA</name>
<proteinExistence type="inferred from homology"/>
<feature type="chain" id="PRO_0000403033" description="FMN reductase (NADH) RutF">
    <location>
        <begin position="1"/>
        <end position="201"/>
    </location>
</feature>
<feature type="region of interest" description="Disordered" evidence="2">
    <location>
        <begin position="169"/>
        <end position="201"/>
    </location>
</feature>
<reference key="1">
    <citation type="journal article" date="2009" name="PLoS ONE">
        <title>Methylobacterium genome sequences: a reference blueprint to investigate microbial metabolism of C1 compounds from natural and industrial sources.</title>
        <authorList>
            <person name="Vuilleumier S."/>
            <person name="Chistoserdova L."/>
            <person name="Lee M.-C."/>
            <person name="Bringel F."/>
            <person name="Lajus A."/>
            <person name="Zhou Y."/>
            <person name="Gourion B."/>
            <person name="Barbe V."/>
            <person name="Chang J."/>
            <person name="Cruveiller S."/>
            <person name="Dossat C."/>
            <person name="Gillett W."/>
            <person name="Gruffaz C."/>
            <person name="Haugen E."/>
            <person name="Hourcade E."/>
            <person name="Levy R."/>
            <person name="Mangenot S."/>
            <person name="Muller E."/>
            <person name="Nadalig T."/>
            <person name="Pagni M."/>
            <person name="Penny C."/>
            <person name="Peyraud R."/>
            <person name="Robinson D.G."/>
            <person name="Roche D."/>
            <person name="Rouy Z."/>
            <person name="Saenampechek C."/>
            <person name="Salvignol G."/>
            <person name="Vallenet D."/>
            <person name="Wu Z."/>
            <person name="Marx C.J."/>
            <person name="Vorholt J.A."/>
            <person name="Olson M.V."/>
            <person name="Kaul R."/>
            <person name="Weissenbach J."/>
            <person name="Medigue C."/>
            <person name="Lidstrom M.E."/>
        </authorList>
    </citation>
    <scope>NUCLEOTIDE SEQUENCE [LARGE SCALE GENOMIC DNA]</scope>
    <source>
        <strain>ATCC 14718 / DSM 1338 / JCM 2805 / NCIMB 9133 / AM1</strain>
    </source>
</reference>
<organism>
    <name type="scientific">Methylorubrum extorquens (strain ATCC 14718 / DSM 1338 / JCM 2805 / NCIMB 9133 / AM1)</name>
    <name type="common">Methylobacterium extorquens</name>
    <dbReference type="NCBI Taxonomy" id="272630"/>
    <lineage>
        <taxon>Bacteria</taxon>
        <taxon>Pseudomonadati</taxon>
        <taxon>Pseudomonadota</taxon>
        <taxon>Alphaproteobacteria</taxon>
        <taxon>Hyphomicrobiales</taxon>
        <taxon>Methylobacteriaceae</taxon>
        <taxon>Methylorubrum</taxon>
    </lineage>
</organism>
<gene>
    <name evidence="1" type="primary">rutF</name>
    <name type="ordered locus">MexAM1_META1p1660</name>
</gene>
<protein>
    <recommendedName>
        <fullName evidence="1">FMN reductase (NADH) RutF</fullName>
        <ecNumber evidence="1">1.5.1.42</ecNumber>
    </recommendedName>
    <alternativeName>
        <fullName evidence="1">FMN reductase</fullName>
    </alternativeName>
    <alternativeName>
        <fullName evidence="1">NADH-flavin reductase RutF</fullName>
    </alternativeName>
    <alternativeName>
        <fullName evidence="1">NADH:flavin oxidoreductase</fullName>
    </alternativeName>
</protein>
<comment type="function">
    <text evidence="1">Catalyzes the reduction of FMN to FMNH2 which is used to reduce pyrimidine by RutA via the Rut pathway.</text>
</comment>
<comment type="catalytic activity">
    <reaction evidence="1">
        <text>FMNH2 + NAD(+) = FMN + NADH + 2 H(+)</text>
        <dbReference type="Rhea" id="RHEA:21620"/>
        <dbReference type="ChEBI" id="CHEBI:15378"/>
        <dbReference type="ChEBI" id="CHEBI:57540"/>
        <dbReference type="ChEBI" id="CHEBI:57618"/>
        <dbReference type="ChEBI" id="CHEBI:57945"/>
        <dbReference type="ChEBI" id="CHEBI:58210"/>
        <dbReference type="EC" id="1.5.1.42"/>
    </reaction>
</comment>
<comment type="similarity">
    <text evidence="1">Belongs to the non-flavoprotein flavin reductase family. RutF subfamily.</text>
</comment>